<keyword id="KW-0067">ATP-binding</keyword>
<keyword id="KW-0342">GTP-binding</keyword>
<keyword id="KW-0547">Nucleotide-binding</keyword>
<keyword id="KW-1185">Reference proteome</keyword>
<keyword id="KW-0694">RNA-binding</keyword>
<comment type="function">
    <text evidence="1">Modulates the synthesis of GlmS, by affecting the processing and stability of the regulatory small RNA GlmZ. When glucosamine-6-phosphate (GlcN6P) concentrations are high in the cell, RapZ binds GlmZ and targets it to cleavage by RNase E. Consequently, GlmZ is inactivated and unable to activate GlmS synthesis. Under low GlcN6P concentrations, RapZ is sequestered and inactivated by an other regulatory small RNA, GlmY, preventing GlmZ degradation and leading to synthesis of GlmS.</text>
</comment>
<comment type="subunit">
    <text evidence="1">Homotrimer.</text>
</comment>
<comment type="similarity">
    <text evidence="1">Belongs to the RapZ-like family. RapZ subfamily.</text>
</comment>
<name>RAPZ_ERWT9</name>
<organism>
    <name type="scientific">Erwinia tasmaniensis (strain DSM 17950 / CFBP 7177 / CIP 109463 / NCPPB 4357 / Et1/99)</name>
    <dbReference type="NCBI Taxonomy" id="465817"/>
    <lineage>
        <taxon>Bacteria</taxon>
        <taxon>Pseudomonadati</taxon>
        <taxon>Pseudomonadota</taxon>
        <taxon>Gammaproteobacteria</taxon>
        <taxon>Enterobacterales</taxon>
        <taxon>Erwiniaceae</taxon>
        <taxon>Erwinia</taxon>
    </lineage>
</organism>
<protein>
    <recommendedName>
        <fullName evidence="1">RNase adapter protein RapZ</fullName>
    </recommendedName>
</protein>
<gene>
    <name evidence="1" type="primary">rapZ</name>
    <name type="ordered locus">ETA_03120</name>
</gene>
<dbReference type="EMBL" id="CU468135">
    <property type="protein sequence ID" value="CAO95358.1"/>
    <property type="molecule type" value="Genomic_DNA"/>
</dbReference>
<dbReference type="RefSeq" id="WP_012440074.1">
    <property type="nucleotide sequence ID" value="NC_010694.1"/>
</dbReference>
<dbReference type="SMR" id="B2VGV3"/>
<dbReference type="STRING" id="465817.ETA_03120"/>
<dbReference type="KEGG" id="eta:ETA_03120"/>
<dbReference type="eggNOG" id="COG1660">
    <property type="taxonomic scope" value="Bacteria"/>
</dbReference>
<dbReference type="HOGENOM" id="CLU_059558_1_1_6"/>
<dbReference type="OrthoDB" id="9784461at2"/>
<dbReference type="Proteomes" id="UP000001726">
    <property type="component" value="Chromosome"/>
</dbReference>
<dbReference type="GO" id="GO:0005524">
    <property type="term" value="F:ATP binding"/>
    <property type="evidence" value="ECO:0007669"/>
    <property type="project" value="UniProtKB-UniRule"/>
</dbReference>
<dbReference type="GO" id="GO:0005525">
    <property type="term" value="F:GTP binding"/>
    <property type="evidence" value="ECO:0007669"/>
    <property type="project" value="UniProtKB-UniRule"/>
</dbReference>
<dbReference type="GO" id="GO:0003723">
    <property type="term" value="F:RNA binding"/>
    <property type="evidence" value="ECO:0007669"/>
    <property type="project" value="UniProtKB-KW"/>
</dbReference>
<dbReference type="HAMAP" id="MF_00636">
    <property type="entry name" value="RapZ_like"/>
    <property type="match status" value="1"/>
</dbReference>
<dbReference type="InterPro" id="IPR027417">
    <property type="entry name" value="P-loop_NTPase"/>
</dbReference>
<dbReference type="InterPro" id="IPR005337">
    <property type="entry name" value="RapZ-like"/>
</dbReference>
<dbReference type="InterPro" id="IPR053930">
    <property type="entry name" value="RapZ-like_N"/>
</dbReference>
<dbReference type="InterPro" id="IPR053931">
    <property type="entry name" value="RapZ_C"/>
</dbReference>
<dbReference type="NCBIfam" id="NF003828">
    <property type="entry name" value="PRK05416.1"/>
    <property type="match status" value="1"/>
</dbReference>
<dbReference type="PANTHER" id="PTHR30448">
    <property type="entry name" value="RNASE ADAPTER PROTEIN RAPZ"/>
    <property type="match status" value="1"/>
</dbReference>
<dbReference type="PANTHER" id="PTHR30448:SF0">
    <property type="entry name" value="RNASE ADAPTER PROTEIN RAPZ"/>
    <property type="match status" value="1"/>
</dbReference>
<dbReference type="Pfam" id="PF22740">
    <property type="entry name" value="PapZ_C"/>
    <property type="match status" value="1"/>
</dbReference>
<dbReference type="Pfam" id="PF03668">
    <property type="entry name" value="RapZ-like_N"/>
    <property type="match status" value="1"/>
</dbReference>
<dbReference type="PIRSF" id="PIRSF005052">
    <property type="entry name" value="P-loopkin"/>
    <property type="match status" value="1"/>
</dbReference>
<dbReference type="SUPFAM" id="SSF52540">
    <property type="entry name" value="P-loop containing nucleoside triphosphate hydrolases"/>
    <property type="match status" value="1"/>
</dbReference>
<accession>B2VGV3</accession>
<feature type="chain" id="PRO_1000130756" description="RNase adapter protein RapZ">
    <location>
        <begin position="1"/>
        <end position="284"/>
    </location>
</feature>
<feature type="region of interest" description="RNA-binding" evidence="1">
    <location>
        <begin position="266"/>
        <end position="284"/>
    </location>
</feature>
<feature type="binding site" evidence="1">
    <location>
        <begin position="8"/>
        <end position="15"/>
    </location>
    <ligand>
        <name>ATP</name>
        <dbReference type="ChEBI" id="CHEBI:30616"/>
    </ligand>
</feature>
<feature type="binding site" evidence="1">
    <location>
        <begin position="56"/>
        <end position="59"/>
    </location>
    <ligand>
        <name>GTP</name>
        <dbReference type="ChEBI" id="CHEBI:37565"/>
    </ligand>
</feature>
<proteinExistence type="inferred from homology"/>
<reference key="1">
    <citation type="journal article" date="2008" name="Environ. Microbiol.">
        <title>The genome of Erwinia tasmaniensis strain Et1/99, a non-pathogenic bacterium in the genus Erwinia.</title>
        <authorList>
            <person name="Kube M."/>
            <person name="Migdoll A.M."/>
            <person name="Mueller I."/>
            <person name="Kuhl H."/>
            <person name="Beck A."/>
            <person name="Reinhardt R."/>
            <person name="Geider K."/>
        </authorList>
    </citation>
    <scope>NUCLEOTIDE SEQUENCE [LARGE SCALE GENOMIC DNA]</scope>
    <source>
        <strain>DSM 17950 / CFBP 7177 / CIP 109463 / NCPPB 4357 / Et1/99</strain>
    </source>
</reference>
<sequence>MVLMIVSGRSGSGKSVALRALEDMGFYCVDNLPVVLLPDLAHSLAERNMSAAVSIDVRNMPESPEVFENALTSLPDSFSPQLLFLDADRNTLIRRYSDTRRLHPLSSKNLSLESAIDEENVLLEPLRSRADLIIDTSEMSVHELAEMLRTRLLGKRERELTMVFESFGFKHGIPIDADYVFDVRFLPNPHWDPKLRPMTGLDRPVAAFLDRHTEVHNFIYQTRSYLELWLPMLETNNRSYLTVAIGCTGGKHRSVYIAEQLADYFRSRGKNVQSRHRTLEKRRS</sequence>
<evidence type="ECO:0000255" key="1">
    <source>
        <dbReference type="HAMAP-Rule" id="MF_00636"/>
    </source>
</evidence>